<comment type="function">
    <text evidence="1">Binds 16S rRNA, required for the assembly of 30S particles.</text>
</comment>
<comment type="subunit">
    <text evidence="1">Part of the 30S ribosomal subunit.</text>
</comment>
<comment type="subcellular location">
    <subcellularLocation>
        <location>Plastid</location>
        <location>Chloroplast</location>
    </subcellularLocation>
</comment>
<comment type="similarity">
    <text evidence="1">Belongs to the universal ribosomal protein uS14 family.</text>
</comment>
<gene>
    <name evidence="1" type="primary">rps14</name>
</gene>
<feature type="chain" id="PRO_0000354438" description="Small ribosomal subunit protein uS14c">
    <location>
        <begin position="1"/>
        <end position="99"/>
    </location>
</feature>
<keyword id="KW-0150">Chloroplast</keyword>
<keyword id="KW-0934">Plastid</keyword>
<keyword id="KW-0687">Ribonucleoprotein</keyword>
<keyword id="KW-0689">Ribosomal protein</keyword>
<keyword id="KW-0694">RNA-binding</keyword>
<keyword id="KW-0699">rRNA-binding</keyword>
<evidence type="ECO:0000255" key="1">
    <source>
        <dbReference type="HAMAP-Rule" id="MF_00537"/>
    </source>
</evidence>
<evidence type="ECO:0000305" key="2"/>
<sequence length="99" mass="11779">MAKKSLIEREKKRQRLVRKYRVMREYLKKKEKQVFSLEEKSKIKSKLQSLPRNSAPTRLHRRCVLTGRSRGIYRDFGLCRHIIREKAHACLLPGITKSS</sequence>
<protein>
    <recommendedName>
        <fullName evidence="1">Small ribosomal subunit protein uS14c</fullName>
    </recommendedName>
    <alternativeName>
        <fullName evidence="2">30S ribosomal protein S14, chloroplastic</fullName>
    </alternativeName>
</protein>
<accession>B2Y1U8</accession>
<accession>B7ZHZ1</accession>
<reference key="1">
    <citation type="journal article" date="2008" name="BMC Evol. Biol.">
        <title>The complete plastid genome sequence of Welwitschia mirabilis: an unusually compact plastome with accelerated divergence rates.</title>
        <authorList>
            <person name="McCoy S.R."/>
            <person name="Kuehl J.V."/>
            <person name="Boore J.L."/>
            <person name="Raubeson L.A."/>
        </authorList>
    </citation>
    <scope>NUCLEOTIDE SEQUENCE [LARGE SCALE GENOMIC DNA]</scope>
</reference>
<reference key="2">
    <citation type="journal article" date="2009" name="Mol. Phylogenet. Evol.">
        <title>Evolution of reduced and compact chloroplast genomes (cpDNAs) in gnetophytes: Selection toward a lower-cost strategy.</title>
        <authorList>
            <person name="Wu C.-S."/>
            <person name="Lai Y.-T."/>
            <person name="Lin C.-P."/>
            <person name="Wang Y.-N."/>
            <person name="Chaw S.-M."/>
        </authorList>
    </citation>
    <scope>NUCLEOTIDE SEQUENCE [LARGE SCALE GENOMIC DNA]</scope>
</reference>
<dbReference type="EMBL" id="EU342371">
    <property type="protein sequence ID" value="ABY26778.1"/>
    <property type="molecule type" value="Genomic_DNA"/>
</dbReference>
<dbReference type="EMBL" id="AP009568">
    <property type="protein sequence ID" value="BAH11171.1"/>
    <property type="molecule type" value="Genomic_DNA"/>
</dbReference>
<dbReference type="RefSeq" id="YP_001876565.1">
    <property type="nucleotide sequence ID" value="NC_010654.1"/>
</dbReference>
<dbReference type="SMR" id="B2Y1U8"/>
<dbReference type="GeneID" id="6276236"/>
<dbReference type="GO" id="GO:0009507">
    <property type="term" value="C:chloroplast"/>
    <property type="evidence" value="ECO:0007669"/>
    <property type="project" value="UniProtKB-SubCell"/>
</dbReference>
<dbReference type="GO" id="GO:0015935">
    <property type="term" value="C:small ribosomal subunit"/>
    <property type="evidence" value="ECO:0007669"/>
    <property type="project" value="TreeGrafter"/>
</dbReference>
<dbReference type="GO" id="GO:0019843">
    <property type="term" value="F:rRNA binding"/>
    <property type="evidence" value="ECO:0007669"/>
    <property type="project" value="UniProtKB-UniRule"/>
</dbReference>
<dbReference type="GO" id="GO:0003735">
    <property type="term" value="F:structural constituent of ribosome"/>
    <property type="evidence" value="ECO:0007669"/>
    <property type="project" value="InterPro"/>
</dbReference>
<dbReference type="GO" id="GO:0006412">
    <property type="term" value="P:translation"/>
    <property type="evidence" value="ECO:0007669"/>
    <property type="project" value="UniProtKB-UniRule"/>
</dbReference>
<dbReference type="FunFam" id="1.10.287.1480:FF:000001">
    <property type="entry name" value="30S ribosomal protein S14"/>
    <property type="match status" value="1"/>
</dbReference>
<dbReference type="Gene3D" id="1.10.287.1480">
    <property type="match status" value="1"/>
</dbReference>
<dbReference type="HAMAP" id="MF_00537">
    <property type="entry name" value="Ribosomal_uS14_1"/>
    <property type="match status" value="1"/>
</dbReference>
<dbReference type="InterPro" id="IPR001209">
    <property type="entry name" value="Ribosomal_uS14"/>
</dbReference>
<dbReference type="InterPro" id="IPR023036">
    <property type="entry name" value="Ribosomal_uS14_bac/plastid"/>
</dbReference>
<dbReference type="InterPro" id="IPR018271">
    <property type="entry name" value="Ribosomal_uS14_CS"/>
</dbReference>
<dbReference type="NCBIfam" id="NF006477">
    <property type="entry name" value="PRK08881.1"/>
    <property type="match status" value="1"/>
</dbReference>
<dbReference type="PANTHER" id="PTHR19836">
    <property type="entry name" value="30S RIBOSOMAL PROTEIN S14"/>
    <property type="match status" value="1"/>
</dbReference>
<dbReference type="PANTHER" id="PTHR19836:SF19">
    <property type="entry name" value="SMALL RIBOSOMAL SUBUNIT PROTEIN US14M"/>
    <property type="match status" value="1"/>
</dbReference>
<dbReference type="Pfam" id="PF00253">
    <property type="entry name" value="Ribosomal_S14"/>
    <property type="match status" value="1"/>
</dbReference>
<dbReference type="SUPFAM" id="SSF57716">
    <property type="entry name" value="Glucocorticoid receptor-like (DNA-binding domain)"/>
    <property type="match status" value="1"/>
</dbReference>
<dbReference type="PROSITE" id="PS00527">
    <property type="entry name" value="RIBOSOMAL_S14"/>
    <property type="match status" value="1"/>
</dbReference>
<name>RR14_WELMI</name>
<organism>
    <name type="scientific">Welwitschia mirabilis</name>
    <name type="common">Tree tumbo</name>
    <name type="synonym">Welwitschia bainesii</name>
    <dbReference type="NCBI Taxonomy" id="3377"/>
    <lineage>
        <taxon>Eukaryota</taxon>
        <taxon>Viridiplantae</taxon>
        <taxon>Streptophyta</taxon>
        <taxon>Embryophyta</taxon>
        <taxon>Tracheophyta</taxon>
        <taxon>Spermatophyta</taxon>
        <taxon>Gnetopsida</taxon>
        <taxon>Gnetidae</taxon>
        <taxon>Welwitschiales</taxon>
        <taxon>Welwitschiaceae</taxon>
        <taxon>Welwitschia</taxon>
    </lineage>
</organism>
<proteinExistence type="inferred from homology"/>
<geneLocation type="chloroplast"/>